<gene>
    <name type="ordered locus">HI_1577</name>
</gene>
<reference key="1">
    <citation type="journal article" date="1995" name="Science">
        <title>Whole-genome random sequencing and assembly of Haemophilus influenzae Rd.</title>
        <authorList>
            <person name="Fleischmann R.D."/>
            <person name="Adams M.D."/>
            <person name="White O."/>
            <person name="Clayton R.A."/>
            <person name="Kirkness E.F."/>
            <person name="Kerlavage A.R."/>
            <person name="Bult C.J."/>
            <person name="Tomb J.-F."/>
            <person name="Dougherty B.A."/>
            <person name="Merrick J.M."/>
            <person name="McKenney K."/>
            <person name="Sutton G.G."/>
            <person name="FitzHugh W."/>
            <person name="Fields C.A."/>
            <person name="Gocayne J.D."/>
            <person name="Scott J.D."/>
            <person name="Shirley R."/>
            <person name="Liu L.-I."/>
            <person name="Glodek A."/>
            <person name="Kelley J.M."/>
            <person name="Weidman J.F."/>
            <person name="Phillips C.A."/>
            <person name="Spriggs T."/>
            <person name="Hedblom E."/>
            <person name="Cotton M.D."/>
            <person name="Utterback T.R."/>
            <person name="Hanna M.C."/>
            <person name="Nguyen D.T."/>
            <person name="Saudek D.M."/>
            <person name="Brandon R.C."/>
            <person name="Fine L.D."/>
            <person name="Fritchman J.L."/>
            <person name="Fuhrmann J.L."/>
            <person name="Geoghagen N.S.M."/>
            <person name="Gnehm C.L."/>
            <person name="McDonald L.A."/>
            <person name="Small K.V."/>
            <person name="Fraser C.M."/>
            <person name="Smith H.O."/>
            <person name="Venter J.C."/>
        </authorList>
    </citation>
    <scope>NUCLEOTIDE SEQUENCE [LARGE SCALE GENOMIC DNA]</scope>
    <source>
        <strain>ATCC 51907 / DSM 11121 / KW20 / Rd</strain>
    </source>
</reference>
<keyword id="KW-1185">Reference proteome</keyword>
<name>Y1577_HAEIN</name>
<proteinExistence type="predicted"/>
<sequence>MRESRLSQYKQNKLIEIFLASVTALATAKLVNINKLQLITFIVYHCLSLKAAYIWKCLKVKFKRMKAILVVL</sequence>
<dbReference type="EMBL" id="L42023">
    <property type="protein sequence ID" value="AAC23226.1"/>
    <property type="molecule type" value="Genomic_DNA"/>
</dbReference>
<dbReference type="PIR" id="G64130">
    <property type="entry name" value="G64130"/>
</dbReference>
<dbReference type="SMR" id="Q57070"/>
<dbReference type="STRING" id="71421.HI_1577"/>
<dbReference type="EnsemblBacteria" id="AAC23226">
    <property type="protein sequence ID" value="AAC23226"/>
    <property type="gene ID" value="HI_1577"/>
</dbReference>
<dbReference type="KEGG" id="hin:HI_1577"/>
<dbReference type="HOGENOM" id="CLU_178408_0_0_6"/>
<dbReference type="Proteomes" id="UP000000579">
    <property type="component" value="Chromosome"/>
</dbReference>
<organism>
    <name type="scientific">Haemophilus influenzae (strain ATCC 51907 / DSM 11121 / KW20 / Rd)</name>
    <dbReference type="NCBI Taxonomy" id="71421"/>
    <lineage>
        <taxon>Bacteria</taxon>
        <taxon>Pseudomonadati</taxon>
        <taxon>Pseudomonadota</taxon>
        <taxon>Gammaproteobacteria</taxon>
        <taxon>Pasteurellales</taxon>
        <taxon>Pasteurellaceae</taxon>
        <taxon>Haemophilus</taxon>
    </lineage>
</organism>
<protein>
    <recommendedName>
        <fullName>Uncharacterized protein HI_1577</fullName>
    </recommendedName>
</protein>
<feature type="chain" id="PRO_0000078092" description="Uncharacterized protein HI_1577">
    <location>
        <begin position="1"/>
        <end position="72"/>
    </location>
</feature>
<accession>Q57070</accession>
<accession>P96345</accession>